<dbReference type="EMBL" id="AL591688">
    <property type="protein sequence ID" value="CAC41680.1"/>
    <property type="molecule type" value="Genomic_DNA"/>
</dbReference>
<dbReference type="RefSeq" id="NP_384349.1">
    <property type="nucleotide sequence ID" value="NC_003047.1"/>
</dbReference>
<dbReference type="RefSeq" id="WP_003534369.1">
    <property type="nucleotide sequence ID" value="NC_003047.1"/>
</dbReference>
<dbReference type="SMR" id="Q92SW1"/>
<dbReference type="EnsemblBacteria" id="CAC41680">
    <property type="protein sequence ID" value="CAC41680"/>
    <property type="gene ID" value="SMc00323"/>
</dbReference>
<dbReference type="GeneID" id="89574569"/>
<dbReference type="KEGG" id="sme:SMc00323"/>
<dbReference type="PATRIC" id="fig|266834.11.peg.1609"/>
<dbReference type="eggNOG" id="COG0184">
    <property type="taxonomic scope" value="Bacteria"/>
</dbReference>
<dbReference type="HOGENOM" id="CLU_148518_0_0_5"/>
<dbReference type="OrthoDB" id="9799262at2"/>
<dbReference type="Proteomes" id="UP000001976">
    <property type="component" value="Chromosome"/>
</dbReference>
<dbReference type="GO" id="GO:0022627">
    <property type="term" value="C:cytosolic small ribosomal subunit"/>
    <property type="evidence" value="ECO:0007669"/>
    <property type="project" value="TreeGrafter"/>
</dbReference>
<dbReference type="GO" id="GO:0019843">
    <property type="term" value="F:rRNA binding"/>
    <property type="evidence" value="ECO:0007669"/>
    <property type="project" value="UniProtKB-UniRule"/>
</dbReference>
<dbReference type="GO" id="GO:0003735">
    <property type="term" value="F:structural constituent of ribosome"/>
    <property type="evidence" value="ECO:0007669"/>
    <property type="project" value="InterPro"/>
</dbReference>
<dbReference type="GO" id="GO:0006412">
    <property type="term" value="P:translation"/>
    <property type="evidence" value="ECO:0007669"/>
    <property type="project" value="UniProtKB-UniRule"/>
</dbReference>
<dbReference type="CDD" id="cd00353">
    <property type="entry name" value="Ribosomal_S15p_S13e"/>
    <property type="match status" value="1"/>
</dbReference>
<dbReference type="FunFam" id="1.10.287.10:FF:000002">
    <property type="entry name" value="30S ribosomal protein S15"/>
    <property type="match status" value="1"/>
</dbReference>
<dbReference type="Gene3D" id="6.10.250.3130">
    <property type="match status" value="1"/>
</dbReference>
<dbReference type="Gene3D" id="1.10.287.10">
    <property type="entry name" value="S15/NS1, RNA-binding"/>
    <property type="match status" value="1"/>
</dbReference>
<dbReference type="HAMAP" id="MF_01343_B">
    <property type="entry name" value="Ribosomal_uS15_B"/>
    <property type="match status" value="1"/>
</dbReference>
<dbReference type="InterPro" id="IPR000589">
    <property type="entry name" value="Ribosomal_uS15"/>
</dbReference>
<dbReference type="InterPro" id="IPR005290">
    <property type="entry name" value="Ribosomal_uS15_bac-type"/>
</dbReference>
<dbReference type="InterPro" id="IPR009068">
    <property type="entry name" value="uS15_NS1_RNA-bd_sf"/>
</dbReference>
<dbReference type="NCBIfam" id="TIGR00952">
    <property type="entry name" value="S15_bact"/>
    <property type="match status" value="1"/>
</dbReference>
<dbReference type="PANTHER" id="PTHR23321">
    <property type="entry name" value="RIBOSOMAL PROTEIN S15, BACTERIAL AND ORGANELLAR"/>
    <property type="match status" value="1"/>
</dbReference>
<dbReference type="PANTHER" id="PTHR23321:SF26">
    <property type="entry name" value="SMALL RIBOSOMAL SUBUNIT PROTEIN US15M"/>
    <property type="match status" value="1"/>
</dbReference>
<dbReference type="Pfam" id="PF00312">
    <property type="entry name" value="Ribosomal_S15"/>
    <property type="match status" value="1"/>
</dbReference>
<dbReference type="SMART" id="SM01387">
    <property type="entry name" value="Ribosomal_S15"/>
    <property type="match status" value="1"/>
</dbReference>
<dbReference type="SUPFAM" id="SSF47060">
    <property type="entry name" value="S15/NS1 RNA-binding domain"/>
    <property type="match status" value="1"/>
</dbReference>
<dbReference type="PROSITE" id="PS00362">
    <property type="entry name" value="RIBOSOMAL_S15"/>
    <property type="match status" value="1"/>
</dbReference>
<organism>
    <name type="scientific">Rhizobium meliloti (strain 1021)</name>
    <name type="common">Ensifer meliloti</name>
    <name type="synonym">Sinorhizobium meliloti</name>
    <dbReference type="NCBI Taxonomy" id="266834"/>
    <lineage>
        <taxon>Bacteria</taxon>
        <taxon>Pseudomonadati</taxon>
        <taxon>Pseudomonadota</taxon>
        <taxon>Alphaproteobacteria</taxon>
        <taxon>Hyphomicrobiales</taxon>
        <taxon>Rhizobiaceae</taxon>
        <taxon>Sinorhizobium/Ensifer group</taxon>
        <taxon>Sinorhizobium</taxon>
    </lineage>
</organism>
<name>RS15_RHIME</name>
<reference key="1">
    <citation type="journal article" date="2001" name="Proc. Natl. Acad. Sci. U.S.A.">
        <title>Analysis of the chromosome sequence of the legume symbiont Sinorhizobium meliloti strain 1021.</title>
        <authorList>
            <person name="Capela D."/>
            <person name="Barloy-Hubler F."/>
            <person name="Gouzy J."/>
            <person name="Bothe G."/>
            <person name="Ampe F."/>
            <person name="Batut J."/>
            <person name="Boistard P."/>
            <person name="Becker A."/>
            <person name="Boutry M."/>
            <person name="Cadieu E."/>
            <person name="Dreano S."/>
            <person name="Gloux S."/>
            <person name="Godrie T."/>
            <person name="Goffeau A."/>
            <person name="Kahn D."/>
            <person name="Kiss E."/>
            <person name="Lelaure V."/>
            <person name="Masuy D."/>
            <person name="Pohl T."/>
            <person name="Portetelle D."/>
            <person name="Puehler A."/>
            <person name="Purnelle B."/>
            <person name="Ramsperger U."/>
            <person name="Renard C."/>
            <person name="Thebault P."/>
            <person name="Vandenbol M."/>
            <person name="Weidner S."/>
            <person name="Galibert F."/>
        </authorList>
    </citation>
    <scope>NUCLEOTIDE SEQUENCE [LARGE SCALE GENOMIC DNA]</scope>
    <source>
        <strain>1021</strain>
    </source>
</reference>
<reference key="2">
    <citation type="journal article" date="2001" name="Science">
        <title>The composite genome of the legume symbiont Sinorhizobium meliloti.</title>
        <authorList>
            <person name="Galibert F."/>
            <person name="Finan T.M."/>
            <person name="Long S.R."/>
            <person name="Puehler A."/>
            <person name="Abola P."/>
            <person name="Ampe F."/>
            <person name="Barloy-Hubler F."/>
            <person name="Barnett M.J."/>
            <person name="Becker A."/>
            <person name="Boistard P."/>
            <person name="Bothe G."/>
            <person name="Boutry M."/>
            <person name="Bowser L."/>
            <person name="Buhrmester J."/>
            <person name="Cadieu E."/>
            <person name="Capela D."/>
            <person name="Chain P."/>
            <person name="Cowie A."/>
            <person name="Davis R.W."/>
            <person name="Dreano S."/>
            <person name="Federspiel N.A."/>
            <person name="Fisher R.F."/>
            <person name="Gloux S."/>
            <person name="Godrie T."/>
            <person name="Goffeau A."/>
            <person name="Golding B."/>
            <person name="Gouzy J."/>
            <person name="Gurjal M."/>
            <person name="Hernandez-Lucas I."/>
            <person name="Hong A."/>
            <person name="Huizar L."/>
            <person name="Hyman R.W."/>
            <person name="Jones T."/>
            <person name="Kahn D."/>
            <person name="Kahn M.L."/>
            <person name="Kalman S."/>
            <person name="Keating D.H."/>
            <person name="Kiss E."/>
            <person name="Komp C."/>
            <person name="Lelaure V."/>
            <person name="Masuy D."/>
            <person name="Palm C."/>
            <person name="Peck M.C."/>
            <person name="Pohl T.M."/>
            <person name="Portetelle D."/>
            <person name="Purnelle B."/>
            <person name="Ramsperger U."/>
            <person name="Surzycki R."/>
            <person name="Thebault P."/>
            <person name="Vandenbol M."/>
            <person name="Vorhoelter F.J."/>
            <person name="Weidner S."/>
            <person name="Wells D.H."/>
            <person name="Wong K."/>
            <person name="Yeh K.-C."/>
            <person name="Batut J."/>
        </authorList>
    </citation>
    <scope>NUCLEOTIDE SEQUENCE [LARGE SCALE GENOMIC DNA]</scope>
    <source>
        <strain>1021</strain>
    </source>
</reference>
<comment type="function">
    <text evidence="1">One of the primary rRNA binding proteins, it binds directly to 16S rRNA where it helps nucleate assembly of the platform of the 30S subunit by binding and bridging several RNA helices of the 16S rRNA.</text>
</comment>
<comment type="function">
    <text evidence="1">Forms an intersubunit bridge (bridge B4) with the 23S rRNA of the 50S subunit in the ribosome.</text>
</comment>
<comment type="subunit">
    <text evidence="1">Part of the 30S ribosomal subunit. Forms a bridge to the 50S subunit in the 70S ribosome, contacting the 23S rRNA.</text>
</comment>
<comment type="similarity">
    <text evidence="1">Belongs to the universal ribosomal protein uS15 family.</text>
</comment>
<keyword id="KW-1185">Reference proteome</keyword>
<keyword id="KW-0687">Ribonucleoprotein</keyword>
<keyword id="KW-0689">Ribosomal protein</keyword>
<keyword id="KW-0694">RNA-binding</keyword>
<keyword id="KW-0699">rRNA-binding</keyword>
<feature type="chain" id="PRO_0000115521" description="Small ribosomal subunit protein uS15">
    <location>
        <begin position="1"/>
        <end position="89"/>
    </location>
</feature>
<evidence type="ECO:0000255" key="1">
    <source>
        <dbReference type="HAMAP-Rule" id="MF_01343"/>
    </source>
</evidence>
<evidence type="ECO:0000305" key="2"/>
<gene>
    <name evidence="1" type="primary">rpsO</name>
    <name type="ordered locus">R00243</name>
    <name type="ORF">SMc00323</name>
</gene>
<sequence length="89" mass="10134">MSVTAERKAQIIKEFATVEGDTGSPEVQVAILTERINNLTEHFKDHKKDNHSRRGLLALVSSRRSLLDYLKKKDEARYTKLIGALGIRR</sequence>
<protein>
    <recommendedName>
        <fullName evidence="1">Small ribosomal subunit protein uS15</fullName>
    </recommendedName>
    <alternativeName>
        <fullName evidence="2">30S ribosomal protein S15</fullName>
    </alternativeName>
</protein>
<accession>Q92SW1</accession>
<proteinExistence type="inferred from homology"/>